<name>CRBN_HUMAN</name>
<evidence type="ECO:0000250" key="1"/>
<evidence type="ECO:0000250" key="2">
    <source>
        <dbReference type="UniProtKB" id="Q56AP7"/>
    </source>
</evidence>
<evidence type="ECO:0000250" key="3">
    <source>
        <dbReference type="UniProtKB" id="Q8C7D2"/>
    </source>
</evidence>
<evidence type="ECO:0000255" key="4">
    <source>
        <dbReference type="PROSITE-ProRule" id="PRU01123"/>
    </source>
</evidence>
<evidence type="ECO:0000255" key="5">
    <source>
        <dbReference type="PROSITE-ProRule" id="PRU01124"/>
    </source>
</evidence>
<evidence type="ECO:0000256" key="6">
    <source>
        <dbReference type="SAM" id="MobiDB-lite"/>
    </source>
</evidence>
<evidence type="ECO:0000269" key="7">
    <source>
    </source>
</evidence>
<evidence type="ECO:0000269" key="8">
    <source>
    </source>
</evidence>
<evidence type="ECO:0000269" key="9">
    <source>
    </source>
</evidence>
<evidence type="ECO:0000269" key="10">
    <source>
    </source>
</evidence>
<evidence type="ECO:0000269" key="11">
    <source>
    </source>
</evidence>
<evidence type="ECO:0000269" key="12">
    <source>
    </source>
</evidence>
<evidence type="ECO:0000269" key="13">
    <source>
    </source>
</evidence>
<evidence type="ECO:0000269" key="14">
    <source>
    </source>
</evidence>
<evidence type="ECO:0000269" key="15">
    <source>
    </source>
</evidence>
<evidence type="ECO:0000269" key="16">
    <source>
    </source>
</evidence>
<evidence type="ECO:0000269" key="17">
    <source>
    </source>
</evidence>
<evidence type="ECO:0000303" key="18">
    <source>
    </source>
</evidence>
<evidence type="ECO:0000305" key="19"/>
<evidence type="ECO:0000305" key="20">
    <source>
    </source>
</evidence>
<evidence type="ECO:0000305" key="21">
    <source>
    </source>
</evidence>
<evidence type="ECO:0007744" key="22">
    <source>
        <dbReference type="PDB" id="4TZ4"/>
    </source>
</evidence>
<evidence type="ECO:0007744" key="23">
    <source>
    </source>
</evidence>
<evidence type="ECO:0007829" key="24">
    <source>
        <dbReference type="PDB" id="5FQD"/>
    </source>
</evidence>
<evidence type="ECO:0007829" key="25">
    <source>
        <dbReference type="PDB" id="6H0F"/>
    </source>
</evidence>
<evidence type="ECO:0007829" key="26">
    <source>
        <dbReference type="PDB" id="7BQU"/>
    </source>
</evidence>
<evidence type="ECO:0007829" key="27">
    <source>
        <dbReference type="PDB" id="7BQV"/>
    </source>
</evidence>
<evidence type="ECO:0007829" key="28">
    <source>
        <dbReference type="PDB" id="8D7U"/>
    </source>
</evidence>
<evidence type="ECO:0007829" key="29">
    <source>
        <dbReference type="PDB" id="8RQ1"/>
    </source>
</evidence>
<evidence type="ECO:0007829" key="30">
    <source>
        <dbReference type="PDB" id="8RQ8"/>
    </source>
</evidence>
<evidence type="ECO:0007829" key="31">
    <source>
        <dbReference type="PDB" id="8RQA"/>
    </source>
</evidence>
<evidence type="ECO:0007829" key="32">
    <source>
        <dbReference type="PDB" id="8RQC"/>
    </source>
</evidence>
<evidence type="ECO:0007829" key="33">
    <source>
        <dbReference type="PDB" id="8TNQ"/>
    </source>
</evidence>
<evidence type="ECO:0007829" key="34">
    <source>
        <dbReference type="PDB" id="8TZX"/>
    </source>
</evidence>
<evidence type="ECO:0007829" key="35">
    <source>
        <dbReference type="PDB" id="8U15"/>
    </source>
</evidence>
<comment type="function">
    <text evidence="3 9 10 11 12 13 15 16">Substrate recognition component of a DCX (DDB1-CUL4-X-box) E3 protein ligase complex that mediates the ubiquitination and subsequent proteasomal degradation of target proteins, such as MEIS2, ILF2 or GLUL (PubMed:26990986, PubMed:33009960). Normal degradation of key regulatory proteins is required for normal limb outgrowth and expression of the fibroblast growth factor FGF8 (PubMed:20223979, PubMed:24328678, PubMed:25043012, PubMed:25108355). Maintains presynaptic glutamate release and consequently cognitive functions, such as memory and learning, by negatively regulating large-conductance calcium-activated potassium (BK) channels in excitatory neurons (PubMed:18414909, PubMed:29530986). Likely to function by regulating the assembly and neuronal surface expression of BK channels via its interaction with KCNT1 (PubMed:18414909). May also be involved in regulating anxiety-like behaviors via a BK channel-independent mechanism (By similarity). Plays a negative role in TLR4 signaling by interacting with TRAF6 and ECSIT, leading to inhibition of ECSIT ubiquitination, an important step of the signaling (PubMed:31620128).</text>
</comment>
<comment type="pathway">
    <text evidence="10 21">Protein modification; protein ubiquitination.</text>
</comment>
<comment type="subunit">
    <text evidence="2 10 11 12 13 16 17">Interacts with KCNT1 (By similarity). Component of a DCX (DDB1-CUL4-X-box) protein ligase complex, at least composed of CRBN, CUL4A, DDB1 and RBX1. Interacts directly with DDB1 (PubMed:25043012, PubMed:25108355). Interacts (in pomalidomide-bound form) with IKZF1 and IKZF3 (PubMed:24328678). Interacts with ILF2 (PubMed:33009960). Interacts with TRAF6 and ECSIT (PubMed:31620128).</text>
</comment>
<comment type="interaction">
    <interactant intactId="EBI-2510250">
        <id>Q96SW2</id>
    </interactant>
    <interactant intactId="EBI-21553822">
        <id>Q96A83-2</id>
        <label>COL26A1</label>
    </interactant>
    <organismsDiffer>false</organismsDiffer>
    <experiments>3</experiments>
</comment>
<comment type="interaction">
    <interactant intactId="EBI-2510250">
        <id>Q96SW2</id>
    </interactant>
    <interactant intactId="EBI-1383726">
        <id>P48729</id>
        <label>CSNK1A1</label>
    </interactant>
    <organismsDiffer>false</organismsDiffer>
    <experiments>3</experiments>
</comment>
<comment type="interaction">
    <interactant intactId="EBI-2510250">
        <id>Q96SW2</id>
    </interactant>
    <interactant intactId="EBI-350322">
        <id>Q16531</id>
        <label>DDB1</label>
    </interactant>
    <organismsDiffer>false</organismsDiffer>
    <experiments>4</experiments>
</comment>
<comment type="interaction">
    <interactant intactId="EBI-2510250">
        <id>Q96SW2</id>
    </interactant>
    <interactant intactId="EBI-948266">
        <id>O14901</id>
        <label>KLF11</label>
    </interactant>
    <organismsDiffer>false</organismsDiffer>
    <experiments>3</experiments>
</comment>
<comment type="interaction">
    <interactant intactId="EBI-2510250">
        <id>Q96SW2</id>
    </interactant>
    <interactant intactId="EBI-2555085">
        <id>Q8IVT2</id>
        <label>MISP</label>
    </interactant>
    <organismsDiffer>false</organismsDiffer>
    <experiments>3</experiments>
</comment>
<comment type="interaction">
    <interactant intactId="EBI-2510250">
        <id>Q96SW2</id>
    </interactant>
    <interactant intactId="EBI-741896">
        <id>Q9P286</id>
        <label>PAK5</label>
    </interactant>
    <organismsDiffer>false</organismsDiffer>
    <experiments>4</experiments>
</comment>
<comment type="interaction">
    <interactant intactId="EBI-2510250">
        <id>Q96SW2</id>
    </interactant>
    <interactant intactId="EBI-50433196">
        <id>A0A6Q8PF08</id>
        <label>PMP22</label>
    </interactant>
    <organismsDiffer>false</organismsDiffer>
    <experiments>3</experiments>
</comment>
<comment type="interaction">
    <interactant intactId="EBI-2510250">
        <id>Q96SW2</id>
    </interactant>
    <interactant intactId="EBI-740322">
        <id>Q93062</id>
        <label>RBPMS</label>
    </interactant>
    <organismsDiffer>false</organismsDiffer>
    <experiments>3</experiments>
</comment>
<comment type="interaction">
    <interactant intactId="EBI-10693561">
        <id>Q96SW2-2</id>
    </interactant>
    <interactant intactId="EBI-350322">
        <id>Q16531</id>
        <label>DDB1</label>
    </interactant>
    <organismsDiffer>false</organismsDiffer>
    <experiments>7</experiments>
</comment>
<comment type="interaction">
    <interactant intactId="EBI-10693561">
        <id>Q96SW2-2</id>
    </interactant>
    <interactant intactId="EBI-11522367">
        <id>Q13422-7</id>
        <label>IKZF1</label>
    </interactant>
    <organismsDiffer>false</organismsDiffer>
    <experiments>2</experiments>
</comment>
<comment type="subcellular location">
    <subcellularLocation>
        <location evidence="10">Cytoplasm</location>
    </subcellularLocation>
    <subcellularLocation>
        <location evidence="10">Nucleus</location>
    </subcellularLocation>
    <subcellularLocation>
        <location evidence="1">Membrane</location>
        <topology evidence="1">Peripheral membrane protein</topology>
    </subcellularLocation>
</comment>
<comment type="alternative products">
    <event type="alternative splicing"/>
    <isoform>
        <id>Q96SW2-1</id>
        <name>1</name>
        <sequence type="displayed"/>
    </isoform>
    <isoform>
        <id>Q96SW2-2</id>
        <name>2</name>
        <sequence type="described" ref="VSP_015209"/>
    </isoform>
</comment>
<comment type="tissue specificity">
    <text evidence="7 8">Widely expressed. Highly expressed in brain.</text>
</comment>
<comment type="domain">
    <text evidence="13">The CULT domain binds thalidomide and related drugs, such as pomalidomide and lenalidomide. Drug binding leads to a change in substrate specificity of the human DCX (DDB1-CUL4-X-box) E3 protein ligase complex, while no such change is observed in rodents.</text>
</comment>
<comment type="PTM">
    <text evidence="10 12">Ubiquitinated, ubiquitination is mediated by its own DCX protein ligase complex.</text>
</comment>
<comment type="disease" evidence="7 14">
    <disease id="DI-00715">
        <name>Intellectual developmental disorder, autosomal recessive 2</name>
        <acronym>MRT2</acronym>
        <description>A disorder characterized by significantly below average general intellectual functioning associated with impairments in adaptive behavior and manifested during the developmental period. MRT2 patients display mild intellectual disability with a standard IQ ranged from 50 to 70. IQ scores are lower in males than females. Developmental milestones are mildly delayed. There are no dysmorphic or autistic features.</description>
        <dbReference type="MIM" id="607417"/>
    </disease>
    <text>The disease is caused by variants affecting the gene represented in this entry.</text>
</comment>
<comment type="miscellaneous">
    <text evidence="20 21">Thalidomide was widely prescribed to pregnant women in the late 1950s as a sedative and as treatment against morning sickness. Thalidomide was found to be teratogenic, causing multiple birth defects. More recently, thalidomide use has increased for the treatment of multiple myeloma and erythema nodosum leprosum, a painful complication of leprosy. Binding of pomalidomide and other thalidomide-related drugs leads to a change in substrate specificity of the human DCX (DDB1-CUL4-X-box) E3 protein ligase complex, and this is probably the underlying cause of the teratogenic activity of thalidomide, possibly due to abnormal regulation of the BMP and FGF8 signaling pathways (PubMed:20223979). The thalidomide-induced change in substrate specificity leads to decreased degradation of MEIS2 and other target proteins and increased degradation of MYC, IRF4, IKZF1 and IKZF3, and this is probably the reason for the anti-proliferative and immunomodulatory effects of thalidomide and related drugs (PubMed:25108355). Thalidomide is also teratogenic in chicken and zebrafish, but not in mice.</text>
</comment>
<comment type="similarity">
    <text evidence="19">Belongs to the CRBN family.</text>
</comment>
<comment type="caution">
    <text evidence="19">Although it contains a Lon N-terminal domain also found in proteases of the peptidase S16 family, it does not contain the ATP-binding and catalytic domains, suggesting that it has no protease activity.</text>
</comment>
<comment type="sequence caution" evidence="19">
    <conflict type="frameshift">
        <sequence resource="EMBL-CDS" id="AAF17211"/>
    </conflict>
</comment>
<comment type="sequence caution" evidence="19">
    <conflict type="erroneous initiation">
        <sequence resource="EMBL-CDS" id="BAG35471"/>
    </conflict>
    <text>Truncated N-terminus.</text>
</comment>
<comment type="sequence caution" evidence="19">
    <conflict type="frameshift">
        <sequence resource="EMBL-CDS" id="BAG35471"/>
    </conflict>
</comment>
<comment type="online information" name="Protein Spotlight">
    <link uri="https://www.proteinspotlight.org/back_issues/117"/>
    <text>A short story - Issue 117 of May 2010</text>
</comment>
<feature type="chain" id="PRO_0000076160" description="Protein cereblon">
    <location>
        <begin position="1"/>
        <end position="442"/>
    </location>
</feature>
<feature type="domain" description="Lon N-terminal" evidence="4">
    <location>
        <begin position="81"/>
        <end position="319"/>
    </location>
</feature>
<feature type="domain" description="CULT" evidence="5">
    <location>
        <begin position="318"/>
        <end position="426"/>
    </location>
</feature>
<feature type="region of interest" description="Disordered" evidence="6">
    <location>
        <begin position="1"/>
        <end position="45"/>
    </location>
</feature>
<feature type="compositionally biased region" description="Acidic residues" evidence="6">
    <location>
        <begin position="24"/>
        <end position="35"/>
    </location>
</feature>
<feature type="binding site" evidence="13 22">
    <location>
        <position position="323"/>
    </location>
    <ligand>
        <name>Zn(2+)</name>
        <dbReference type="ChEBI" id="CHEBI:29105"/>
    </ligand>
</feature>
<feature type="binding site" evidence="13 22">
    <location>
        <position position="326"/>
    </location>
    <ligand>
        <name>Zn(2+)</name>
        <dbReference type="ChEBI" id="CHEBI:29105"/>
    </ligand>
</feature>
<feature type="binding site" evidence="13 22">
    <location>
        <position position="378"/>
    </location>
    <ligand>
        <name>(S)-thalidomide</name>
        <dbReference type="ChEBI" id="CHEBI:61918"/>
    </ligand>
</feature>
<feature type="binding site" evidence="13 22">
    <location>
        <position position="380"/>
    </location>
    <ligand>
        <name>(S)-thalidomide</name>
        <dbReference type="ChEBI" id="CHEBI:61918"/>
    </ligand>
</feature>
<feature type="binding site" evidence="13 22">
    <location>
        <position position="386"/>
    </location>
    <ligand>
        <name>(S)-thalidomide</name>
        <dbReference type="ChEBI" id="CHEBI:61918"/>
    </ligand>
</feature>
<feature type="binding site" evidence="13 22">
    <location>
        <position position="391"/>
    </location>
    <ligand>
        <name>Zn(2+)</name>
        <dbReference type="ChEBI" id="CHEBI:29105"/>
    </ligand>
</feature>
<feature type="binding site" evidence="13 22">
    <location>
        <position position="394"/>
    </location>
    <ligand>
        <name>Zn(2+)</name>
        <dbReference type="ChEBI" id="CHEBI:29105"/>
    </ligand>
</feature>
<feature type="modified residue" description="Phosphoserine" evidence="23">
    <location>
        <position position="25"/>
    </location>
</feature>
<feature type="splice variant" id="VSP_015209" description="In isoform 2." evidence="18">
    <location>
        <position position="23"/>
    </location>
</feature>
<feature type="sequence variant" id="VAR_079409" description="In MRT2; dbSNP:rs797045036." evidence="14">
    <original>C</original>
    <variation>R</variation>
    <location>
        <position position="391"/>
    </location>
</feature>
<feature type="mutagenesis site" description="Abolishes thalidomide-binding without affecting DCX protein ligase complex activity; when associated with A-386." evidence="10">
    <original>Y</original>
    <variation>A</variation>
    <location>
        <position position="384"/>
    </location>
</feature>
<feature type="mutagenesis site" description="Abolishes thalidomide-binding without affecting DCX protein ligase complex activity; when associated with A-384. Abolishes pomalidomide-induced change in substrate specificity and abolishes pomalidomide-induced decrease in cell viability that is brought about by increased degradation of MYC, IRF4 and IKZF3." evidence="10 13">
    <original>W</original>
    <variation>A</variation>
    <location>
        <position position="386"/>
    </location>
</feature>
<feature type="mutagenesis site" description="Fails to rescue increased BK channel activity and decreased probability of neurotransmission in a mouse hippocampal neuron model." evidence="15">
    <location>
        <begin position="419"/>
        <end position="442"/>
    </location>
</feature>
<feature type="sequence conflict" description="In Ref. 2; AAH67811." evidence="19" ref="2">
    <original>K</original>
    <variation>R</variation>
    <location>
        <position position="229"/>
    </location>
</feature>
<feature type="sequence conflict" description="In Ref. 1; BAG35471." evidence="19" ref="1">
    <original>L</original>
    <variation>P</variation>
    <location>
        <position position="237"/>
    </location>
</feature>
<feature type="sequence conflict" description="In Ref. 1; BAG35471." evidence="19" ref="1">
    <original>D</original>
    <variation>G</variation>
    <location>
        <position position="292"/>
    </location>
</feature>
<feature type="sequence conflict" description="In Ref. 1; BAG35471." evidence="19" ref="1">
    <original>E</original>
    <variation>G</variation>
    <location>
        <position position="330"/>
    </location>
</feature>
<feature type="turn" evidence="24">
    <location>
        <begin position="51"/>
        <end position="53"/>
    </location>
</feature>
<feature type="helix" evidence="30">
    <location>
        <begin position="54"/>
        <end position="56"/>
    </location>
</feature>
<feature type="turn" evidence="32">
    <location>
        <begin position="58"/>
        <end position="60"/>
    </location>
</feature>
<feature type="strand" evidence="32">
    <location>
        <begin position="78"/>
        <end position="83"/>
    </location>
</feature>
<feature type="strand" evidence="32">
    <location>
        <begin position="96"/>
        <end position="101"/>
    </location>
</feature>
<feature type="helix" evidence="32">
    <location>
        <begin position="104"/>
        <end position="115"/>
    </location>
</feature>
<feature type="turn" evidence="29">
    <location>
        <begin position="116"/>
        <end position="118"/>
    </location>
</feature>
<feature type="strand" evidence="32">
    <location>
        <begin position="119"/>
        <end position="123"/>
    </location>
</feature>
<feature type="turn" evidence="33">
    <location>
        <begin position="128"/>
        <end position="131"/>
    </location>
</feature>
<feature type="strand" evidence="32">
    <location>
        <begin position="134"/>
        <end position="149"/>
    </location>
</feature>
<feature type="strand" evidence="32">
    <location>
        <begin position="152"/>
        <end position="172"/>
    </location>
</feature>
<feature type="strand" evidence="35">
    <location>
        <begin position="174"/>
        <end position="176"/>
    </location>
</feature>
<feature type="strand" evidence="32">
    <location>
        <begin position="178"/>
        <end position="184"/>
    </location>
</feature>
<feature type="turn" evidence="33">
    <location>
        <begin position="193"/>
        <end position="196"/>
    </location>
</feature>
<feature type="helix" evidence="33">
    <location>
        <begin position="201"/>
        <end position="203"/>
    </location>
</feature>
<feature type="helix" evidence="34">
    <location>
        <begin position="204"/>
        <end position="206"/>
    </location>
</feature>
<feature type="strand" evidence="28">
    <location>
        <begin position="212"/>
        <end position="215"/>
    </location>
</feature>
<feature type="turn" evidence="33">
    <location>
        <begin position="218"/>
        <end position="220"/>
    </location>
</feature>
<feature type="helix" evidence="33">
    <location>
        <begin position="221"/>
        <end position="231"/>
    </location>
</feature>
<feature type="helix" evidence="33">
    <location>
        <begin position="233"/>
        <end position="237"/>
    </location>
</feature>
<feature type="strand" evidence="33">
    <location>
        <begin position="238"/>
        <end position="240"/>
    </location>
</feature>
<feature type="helix" evidence="33">
    <location>
        <begin position="242"/>
        <end position="246"/>
    </location>
</feature>
<feature type="helix" evidence="32">
    <location>
        <begin position="251"/>
        <end position="265"/>
    </location>
</feature>
<feature type="helix" evidence="32">
    <location>
        <begin position="270"/>
        <end position="272"/>
    </location>
</feature>
<feature type="helix" evidence="32">
    <location>
        <begin position="277"/>
        <end position="286"/>
    </location>
</feature>
<feature type="helix" evidence="32">
    <location>
        <begin position="292"/>
        <end position="297"/>
    </location>
</feature>
<feature type="helix" evidence="32">
    <location>
        <begin position="304"/>
        <end position="315"/>
    </location>
</feature>
<feature type="strand" evidence="27">
    <location>
        <begin position="320"/>
        <end position="323"/>
    </location>
</feature>
<feature type="turn" evidence="27">
    <location>
        <begin position="324"/>
        <end position="326"/>
    </location>
</feature>
<feature type="strand" evidence="27">
    <location>
        <begin position="330"/>
        <end position="333"/>
    </location>
</feature>
<feature type="helix" evidence="27">
    <location>
        <begin position="334"/>
        <end position="336"/>
    </location>
</feature>
<feature type="strand" evidence="26">
    <location>
        <begin position="341"/>
        <end position="343"/>
    </location>
</feature>
<feature type="strand" evidence="27">
    <location>
        <begin position="345"/>
        <end position="350"/>
    </location>
</feature>
<feature type="strand" evidence="31">
    <location>
        <begin position="352"/>
        <end position="354"/>
    </location>
</feature>
<feature type="strand" evidence="27">
    <location>
        <begin position="356"/>
        <end position="363"/>
    </location>
</feature>
<feature type="strand" evidence="27">
    <location>
        <begin position="367"/>
        <end position="375"/>
    </location>
</feature>
<feature type="strand" evidence="27">
    <location>
        <begin position="384"/>
        <end position="391"/>
    </location>
</feature>
<feature type="turn" evidence="27">
    <location>
        <begin position="392"/>
        <end position="394"/>
    </location>
</feature>
<feature type="strand" evidence="27">
    <location>
        <begin position="397"/>
        <end position="406"/>
    </location>
</feature>
<feature type="strand" evidence="27">
    <location>
        <begin position="410"/>
        <end position="418"/>
    </location>
</feature>
<feature type="helix" evidence="27">
    <location>
        <begin position="419"/>
        <end position="421"/>
    </location>
</feature>
<feature type="strand" evidence="27">
    <location>
        <begin position="422"/>
        <end position="424"/>
    </location>
</feature>
<feature type="strand" evidence="24">
    <location>
        <begin position="427"/>
        <end position="429"/>
    </location>
</feature>
<feature type="strand" evidence="25">
    <location>
        <begin position="432"/>
        <end position="434"/>
    </location>
</feature>
<organism>
    <name type="scientific">Homo sapiens</name>
    <name type="common">Human</name>
    <dbReference type="NCBI Taxonomy" id="9606"/>
    <lineage>
        <taxon>Eukaryota</taxon>
        <taxon>Metazoa</taxon>
        <taxon>Chordata</taxon>
        <taxon>Craniata</taxon>
        <taxon>Vertebrata</taxon>
        <taxon>Euteleostomi</taxon>
        <taxon>Mammalia</taxon>
        <taxon>Eutheria</taxon>
        <taxon>Euarchontoglires</taxon>
        <taxon>Primates</taxon>
        <taxon>Haplorrhini</taxon>
        <taxon>Catarrhini</taxon>
        <taxon>Hominidae</taxon>
        <taxon>Homo</taxon>
    </lineage>
</organism>
<proteinExistence type="evidence at protein level"/>
<dbReference type="EMBL" id="AK027507">
    <property type="protein sequence ID" value="BAB55162.1"/>
    <property type="molecule type" value="mRNA"/>
</dbReference>
<dbReference type="EMBL" id="AK312577">
    <property type="protein sequence ID" value="BAG35471.1"/>
    <property type="status" value="ALT_SEQ"/>
    <property type="molecule type" value="mRNA"/>
</dbReference>
<dbReference type="EMBL" id="AC024060">
    <property type="status" value="NOT_ANNOTATED_CDS"/>
    <property type="molecule type" value="Genomic_DNA"/>
</dbReference>
<dbReference type="EMBL" id="BC017419">
    <property type="protein sequence ID" value="AAH17419.1"/>
    <property type="molecule type" value="mRNA"/>
</dbReference>
<dbReference type="EMBL" id="BC067811">
    <property type="protein sequence ID" value="AAH67811.1"/>
    <property type="molecule type" value="mRNA"/>
</dbReference>
<dbReference type="EMBL" id="AF117230">
    <property type="protein sequence ID" value="AAF17211.1"/>
    <property type="status" value="ALT_FRAME"/>
    <property type="molecule type" value="mRNA"/>
</dbReference>
<dbReference type="EMBL" id="CR627060">
    <property type="protein sequence ID" value="CAH10361.1"/>
    <property type="molecule type" value="mRNA"/>
</dbReference>
<dbReference type="CCDS" id="CCDS2562.1">
    <molecule id="Q96SW2-1"/>
</dbReference>
<dbReference type="CCDS" id="CCDS54547.1">
    <molecule id="Q96SW2-2"/>
</dbReference>
<dbReference type="RefSeq" id="NP_001166953.1">
    <molecule id="Q96SW2-2"/>
    <property type="nucleotide sequence ID" value="NM_001173482.1"/>
</dbReference>
<dbReference type="RefSeq" id="NP_057386.2">
    <molecule id="Q96SW2-1"/>
    <property type="nucleotide sequence ID" value="NM_016302.3"/>
</dbReference>
<dbReference type="PDB" id="4M91">
    <property type="method" value="X-ray"/>
    <property type="resolution" value="1.10 A"/>
    <property type="chains" value="B=229-240"/>
</dbReference>
<dbReference type="PDB" id="4TZ4">
    <property type="method" value="X-ray"/>
    <property type="resolution" value="3.01 A"/>
    <property type="chains" value="C=48-428"/>
</dbReference>
<dbReference type="PDB" id="5FQD">
    <property type="method" value="X-ray"/>
    <property type="resolution" value="2.45 A"/>
    <property type="chains" value="B/E=41-442"/>
</dbReference>
<dbReference type="PDB" id="5HXB">
    <property type="method" value="X-ray"/>
    <property type="resolution" value="3.60 A"/>
    <property type="chains" value="C/Z=40-442"/>
</dbReference>
<dbReference type="PDB" id="5V3O">
    <property type="method" value="X-ray"/>
    <property type="resolution" value="3.20 A"/>
    <property type="chains" value="C=40-442"/>
</dbReference>
<dbReference type="PDB" id="6BN7">
    <property type="method" value="X-ray"/>
    <property type="resolution" value="3.50 A"/>
    <property type="chains" value="B=1-442"/>
</dbReference>
<dbReference type="PDB" id="6BN8">
    <property type="method" value="X-ray"/>
    <property type="resolution" value="3.99 A"/>
    <property type="chains" value="B=1-442"/>
</dbReference>
<dbReference type="PDB" id="6BN9">
    <property type="method" value="X-ray"/>
    <property type="resolution" value="4.38 A"/>
    <property type="chains" value="B=1-442"/>
</dbReference>
<dbReference type="PDB" id="6BNB">
    <property type="method" value="X-ray"/>
    <property type="resolution" value="6.34 A"/>
    <property type="chains" value="B=1-442"/>
</dbReference>
<dbReference type="PDB" id="6BOY">
    <property type="method" value="X-ray"/>
    <property type="resolution" value="3.33 A"/>
    <property type="chains" value="B=1-442"/>
</dbReference>
<dbReference type="PDB" id="6H0F">
    <property type="method" value="X-ray"/>
    <property type="resolution" value="3.25 A"/>
    <property type="chains" value="B/E/H/K=41-442"/>
</dbReference>
<dbReference type="PDB" id="6H0G">
    <property type="method" value="X-ray"/>
    <property type="resolution" value="4.25 A"/>
    <property type="chains" value="B/E=41-397"/>
</dbReference>
<dbReference type="PDB" id="6UML">
    <property type="method" value="X-ray"/>
    <property type="resolution" value="3.58 A"/>
    <property type="chains" value="C=40-442"/>
</dbReference>
<dbReference type="PDB" id="6XK9">
    <property type="method" value="X-ray"/>
    <property type="resolution" value="3.64 A"/>
    <property type="chains" value="C/Z=40-442"/>
</dbReference>
<dbReference type="PDB" id="7BQU">
    <property type="method" value="X-ray"/>
    <property type="resolution" value="1.90 A"/>
    <property type="chains" value="A=318-426"/>
</dbReference>
<dbReference type="PDB" id="7BQV">
    <property type="method" value="X-ray"/>
    <property type="resolution" value="1.80 A"/>
    <property type="chains" value="A=318-426"/>
</dbReference>
<dbReference type="PDB" id="7LPS">
    <property type="method" value="X-ray"/>
    <property type="resolution" value="3.78 A"/>
    <property type="chains" value="B/E/H/K=47-436"/>
</dbReference>
<dbReference type="PDB" id="7U8F">
    <property type="method" value="X-ray"/>
    <property type="resolution" value="3.15 A"/>
    <property type="chains" value="A/D=40-442"/>
</dbReference>
<dbReference type="PDB" id="8CVP">
    <property type="method" value="EM"/>
    <property type="resolution" value="3.40 A"/>
    <property type="chains" value="B=1-442"/>
</dbReference>
<dbReference type="PDB" id="8D7U">
    <property type="method" value="EM"/>
    <property type="resolution" value="3.10 A"/>
    <property type="chains" value="B=1-442"/>
</dbReference>
<dbReference type="PDB" id="8D7V">
    <property type="method" value="EM"/>
    <property type="resolution" value="3.20 A"/>
    <property type="chains" value="B=1-442"/>
</dbReference>
<dbReference type="PDB" id="8D7W">
    <property type="method" value="EM"/>
    <property type="resolution" value="3.10 A"/>
    <property type="chains" value="B=1-442"/>
</dbReference>
<dbReference type="PDB" id="8D7X">
    <property type="method" value="EM"/>
    <property type="resolution" value="3.40 A"/>
    <property type="chains" value="B=1-442"/>
</dbReference>
<dbReference type="PDB" id="8D7Y">
    <property type="method" value="EM"/>
    <property type="resolution" value="3.40 A"/>
    <property type="chains" value="B=1-442"/>
</dbReference>
<dbReference type="PDB" id="8D7Z">
    <property type="method" value="EM"/>
    <property type="resolution" value="3.10 A"/>
    <property type="chains" value="B=1-442"/>
</dbReference>
<dbReference type="PDB" id="8D80">
    <property type="method" value="EM"/>
    <property type="resolution" value="3.60 A"/>
    <property type="chains" value="B=1-442"/>
</dbReference>
<dbReference type="PDB" id="8D81">
    <property type="method" value="EM"/>
    <property type="resolution" value="3.90 A"/>
    <property type="chains" value="B=1-442"/>
</dbReference>
<dbReference type="PDB" id="8DEY">
    <property type="method" value="X-ray"/>
    <property type="resolution" value="3.70 A"/>
    <property type="chains" value="A/D=70-442"/>
</dbReference>
<dbReference type="PDB" id="8G66">
    <property type="method" value="X-ray"/>
    <property type="resolution" value="3.45 A"/>
    <property type="chains" value="B/E=41-442"/>
</dbReference>
<dbReference type="PDB" id="8OIZ">
    <property type="method" value="X-ray"/>
    <property type="resolution" value="2.50 A"/>
    <property type="chains" value="B=40-442"/>
</dbReference>
<dbReference type="PDB" id="8OJH">
    <property type="method" value="X-ray"/>
    <property type="resolution" value="2.72 A"/>
    <property type="chains" value="B=40-442"/>
</dbReference>
<dbReference type="PDB" id="8RQ1">
    <property type="method" value="X-ray"/>
    <property type="resolution" value="3.11 A"/>
    <property type="chains" value="A=41-187, A=249-426"/>
</dbReference>
<dbReference type="PDB" id="8RQ8">
    <property type="method" value="X-ray"/>
    <property type="resolution" value="2.19 A"/>
    <property type="chains" value="A=41-187, A=249-426"/>
</dbReference>
<dbReference type="PDB" id="8RQ9">
    <property type="method" value="X-ray"/>
    <property type="resolution" value="2.91 A"/>
    <property type="chains" value="A/C=41-187, A/C=249-426"/>
</dbReference>
<dbReference type="PDB" id="8RQA">
    <property type="method" value="X-ray"/>
    <property type="resolution" value="2.50 A"/>
    <property type="chains" value="A=41-187, A=249-426"/>
</dbReference>
<dbReference type="PDB" id="8RQC">
    <property type="method" value="X-ray"/>
    <property type="resolution" value="2.15 A"/>
    <property type="chains" value="A/D=41-187, A/D=249-426"/>
</dbReference>
<dbReference type="PDB" id="8TNP">
    <property type="method" value="EM"/>
    <property type="resolution" value="3.30 A"/>
    <property type="chains" value="B=1-442"/>
</dbReference>
<dbReference type="PDB" id="8TNQ">
    <property type="method" value="EM"/>
    <property type="resolution" value="2.41 A"/>
    <property type="chains" value="B=1-442"/>
</dbReference>
<dbReference type="PDB" id="8TNR">
    <property type="method" value="EM"/>
    <property type="resolution" value="2.50 A"/>
    <property type="chains" value="B=1-442"/>
</dbReference>
<dbReference type="PDB" id="8TZX">
    <property type="method" value="X-ray"/>
    <property type="resolution" value="3.15 A"/>
    <property type="chains" value="A/D=70-442"/>
</dbReference>
<dbReference type="PDB" id="8U15">
    <property type="method" value="X-ray"/>
    <property type="resolution" value="2.95 A"/>
    <property type="chains" value="A/D=70-442"/>
</dbReference>
<dbReference type="PDB" id="8U16">
    <property type="method" value="X-ray"/>
    <property type="resolution" value="2.90 A"/>
    <property type="chains" value="A/D=70-442"/>
</dbReference>
<dbReference type="PDB" id="8U17">
    <property type="method" value="X-ray"/>
    <property type="resolution" value="3.10 A"/>
    <property type="chains" value="A/D=70-442"/>
</dbReference>
<dbReference type="PDB" id="8UH6">
    <property type="method" value="EM"/>
    <property type="resolution" value="3.30 A"/>
    <property type="chains" value="B=1-442"/>
</dbReference>
<dbReference type="PDB" id="9CUO">
    <property type="method" value="X-ray"/>
    <property type="resolution" value="1.60 A"/>
    <property type="chains" value="A/B/C/D/E/F=319-427"/>
</dbReference>
<dbReference type="PDB" id="9DJT">
    <property type="method" value="X-ray"/>
    <property type="resolution" value="2.95 A"/>
    <property type="chains" value="A/D=70-442"/>
</dbReference>
<dbReference type="PDB" id="9DJX">
    <property type="method" value="X-ray"/>
    <property type="resolution" value="3.35 A"/>
    <property type="chains" value="A/D=70-442"/>
</dbReference>
<dbReference type="PDB" id="9DQD">
    <property type="method" value="EM"/>
    <property type="resolution" value="3.00 A"/>
    <property type="chains" value="A=1-442"/>
</dbReference>
<dbReference type="PDB" id="9FJX">
    <property type="method" value="X-ray"/>
    <property type="resolution" value="2.00 A"/>
    <property type="chains" value="B=40-442"/>
</dbReference>
<dbReference type="PDB" id="9GAO">
    <property type="method" value="X-ray"/>
    <property type="resolution" value="1.95 A"/>
    <property type="chains" value="A/C=41-187, A/C=249-426"/>
</dbReference>
<dbReference type="PDBsum" id="4M91"/>
<dbReference type="PDBsum" id="4TZ4"/>
<dbReference type="PDBsum" id="5FQD"/>
<dbReference type="PDBsum" id="5HXB"/>
<dbReference type="PDBsum" id="5V3O"/>
<dbReference type="PDBsum" id="6BN7"/>
<dbReference type="PDBsum" id="6BN8"/>
<dbReference type="PDBsum" id="6BN9"/>
<dbReference type="PDBsum" id="6BNB"/>
<dbReference type="PDBsum" id="6BOY"/>
<dbReference type="PDBsum" id="6H0F"/>
<dbReference type="PDBsum" id="6H0G"/>
<dbReference type="PDBsum" id="6UML"/>
<dbReference type="PDBsum" id="6XK9"/>
<dbReference type="PDBsum" id="7BQU"/>
<dbReference type="PDBsum" id="7BQV"/>
<dbReference type="PDBsum" id="7LPS"/>
<dbReference type="PDBsum" id="7U8F"/>
<dbReference type="PDBsum" id="8CVP"/>
<dbReference type="PDBsum" id="8D7U"/>
<dbReference type="PDBsum" id="8D7V"/>
<dbReference type="PDBsum" id="8D7W"/>
<dbReference type="PDBsum" id="8D7X"/>
<dbReference type="PDBsum" id="8D7Y"/>
<dbReference type="PDBsum" id="8D7Z"/>
<dbReference type="PDBsum" id="8D80"/>
<dbReference type="PDBsum" id="8D81"/>
<dbReference type="PDBsum" id="8DEY"/>
<dbReference type="PDBsum" id="8G66"/>
<dbReference type="PDBsum" id="8OIZ"/>
<dbReference type="PDBsum" id="8OJH"/>
<dbReference type="PDBsum" id="8RQ1"/>
<dbReference type="PDBsum" id="8RQ8"/>
<dbReference type="PDBsum" id="8RQ9"/>
<dbReference type="PDBsum" id="8RQA"/>
<dbReference type="PDBsum" id="8RQC"/>
<dbReference type="PDBsum" id="8TNP"/>
<dbReference type="PDBsum" id="8TNQ"/>
<dbReference type="PDBsum" id="8TNR"/>
<dbReference type="PDBsum" id="8TZX"/>
<dbReference type="PDBsum" id="8U15"/>
<dbReference type="PDBsum" id="8U16"/>
<dbReference type="PDBsum" id="8U17"/>
<dbReference type="PDBsum" id="8UH6"/>
<dbReference type="PDBsum" id="9CUO"/>
<dbReference type="PDBsum" id="9DJT"/>
<dbReference type="PDBsum" id="9DJX"/>
<dbReference type="PDBsum" id="9DQD"/>
<dbReference type="PDBsum" id="9FJX"/>
<dbReference type="PDBsum" id="9GAO"/>
<dbReference type="EMDB" id="EMD-27012"/>
<dbReference type="EMDB" id="EMD-27234"/>
<dbReference type="EMDB" id="EMD-27235"/>
<dbReference type="EMDB" id="EMD-27236"/>
<dbReference type="EMDB" id="EMD-27237"/>
<dbReference type="EMDB" id="EMD-27238"/>
<dbReference type="EMDB" id="EMD-27239"/>
<dbReference type="EMDB" id="EMD-27240"/>
<dbReference type="EMDB" id="EMD-27241"/>
<dbReference type="EMDB" id="EMD-27242"/>
<dbReference type="EMDB" id="EMD-41423"/>
<dbReference type="EMDB" id="EMD-41424"/>
<dbReference type="EMDB" id="EMD-41425"/>
<dbReference type="EMDB" id="EMD-41777"/>
<dbReference type="EMDB" id="EMD-41778"/>
<dbReference type="EMDB" id="EMD-41779"/>
<dbReference type="EMDB" id="EMD-42247"/>
<dbReference type="EMDB" id="EMD-47111"/>
<dbReference type="SMR" id="Q96SW2"/>
<dbReference type="BioGRID" id="119360">
    <property type="interactions" value="201"/>
</dbReference>
<dbReference type="ComplexPortal" id="CPX-2759">
    <property type="entry name" value="CRL4-CRBN E3 ubiquitin ligase complex, CUL4A variant"/>
</dbReference>
<dbReference type="ComplexPortal" id="CPX-2762">
    <property type="entry name" value="CRL4-CRBN E3 ubiquitin ligase complex, CUL4B variant"/>
</dbReference>
<dbReference type="CORUM" id="Q96SW2"/>
<dbReference type="DIP" id="DIP-53521N"/>
<dbReference type="FunCoup" id="Q96SW2">
    <property type="interactions" value="4077"/>
</dbReference>
<dbReference type="IntAct" id="Q96SW2">
    <property type="interactions" value="45"/>
</dbReference>
<dbReference type="MINT" id="Q96SW2"/>
<dbReference type="STRING" id="9606.ENSP00000231948"/>
<dbReference type="BindingDB" id="Q96SW2"/>
<dbReference type="ChEMBL" id="CHEMBL3763008"/>
<dbReference type="DrugBank" id="DB14857">
    <property type="generic name" value="Avadomide"/>
</dbReference>
<dbReference type="DrugBank" id="DB12101">
    <property type="generic name" value="Iberdomide"/>
</dbReference>
<dbReference type="DrugBank" id="DB00480">
    <property type="generic name" value="Lenalidomide"/>
</dbReference>
<dbReference type="DrugBank" id="DB08910">
    <property type="generic name" value="Pomalidomide"/>
</dbReference>
<dbReference type="DrugBank" id="DB01041">
    <property type="generic name" value="Thalidomide"/>
</dbReference>
<dbReference type="DrugCentral" id="Q96SW2"/>
<dbReference type="GuidetoPHARMACOLOGY" id="3086"/>
<dbReference type="TCDB" id="8.A.162.1.1">
    <property type="family name" value="the cereblon (crbn) family"/>
</dbReference>
<dbReference type="GlyGen" id="Q96SW2">
    <property type="glycosylation" value="1 site, 1 N-linked glycan (1 site)"/>
</dbReference>
<dbReference type="iPTMnet" id="Q96SW2"/>
<dbReference type="PhosphoSitePlus" id="Q96SW2"/>
<dbReference type="BioMuta" id="CRBN"/>
<dbReference type="DMDM" id="73918916"/>
<dbReference type="jPOST" id="Q96SW2"/>
<dbReference type="MassIVE" id="Q96SW2"/>
<dbReference type="PaxDb" id="9606-ENSP00000231948"/>
<dbReference type="PeptideAtlas" id="Q96SW2"/>
<dbReference type="ProteomicsDB" id="78157">
    <molecule id="Q96SW2-1"/>
</dbReference>
<dbReference type="ProteomicsDB" id="78158">
    <molecule id="Q96SW2-2"/>
</dbReference>
<dbReference type="Pumba" id="Q96SW2"/>
<dbReference type="Antibodypedia" id="25089">
    <property type="antibodies" value="151 antibodies from 30 providers"/>
</dbReference>
<dbReference type="DNASU" id="51185"/>
<dbReference type="Ensembl" id="ENST00000231948.9">
    <molecule id="Q96SW2-1"/>
    <property type="protein sequence ID" value="ENSP00000231948.4"/>
    <property type="gene ID" value="ENSG00000113851.16"/>
</dbReference>
<dbReference type="Ensembl" id="ENST00000432408.6">
    <molecule id="Q96SW2-2"/>
    <property type="protein sequence ID" value="ENSP00000412499.2"/>
    <property type="gene ID" value="ENSG00000113851.16"/>
</dbReference>
<dbReference type="GeneID" id="51185"/>
<dbReference type="KEGG" id="hsa:51185"/>
<dbReference type="MANE-Select" id="ENST00000231948.9">
    <property type="protein sequence ID" value="ENSP00000231948.4"/>
    <property type="RefSeq nucleotide sequence ID" value="NM_016302.4"/>
    <property type="RefSeq protein sequence ID" value="NP_057386.2"/>
</dbReference>
<dbReference type="UCSC" id="uc003bpq.4">
    <molecule id="Q96SW2-1"/>
    <property type="organism name" value="human"/>
</dbReference>
<dbReference type="AGR" id="HGNC:30185"/>
<dbReference type="CTD" id="51185"/>
<dbReference type="DisGeNET" id="51185"/>
<dbReference type="GeneCards" id="CRBN"/>
<dbReference type="HGNC" id="HGNC:30185">
    <property type="gene designation" value="CRBN"/>
</dbReference>
<dbReference type="HPA" id="ENSG00000113851">
    <property type="expression patterns" value="Low tissue specificity"/>
</dbReference>
<dbReference type="MalaCards" id="CRBN"/>
<dbReference type="MIM" id="607417">
    <property type="type" value="phenotype"/>
</dbReference>
<dbReference type="MIM" id="609262">
    <property type="type" value="gene"/>
</dbReference>
<dbReference type="neXtProt" id="NX_Q96SW2"/>
<dbReference type="OpenTargets" id="ENSG00000113851"/>
<dbReference type="Orphanet" id="88616">
    <property type="disease" value="Autosomal recessive non-syndromic intellectual disability"/>
</dbReference>
<dbReference type="PharmGKB" id="PA134926851"/>
<dbReference type="VEuPathDB" id="HostDB:ENSG00000113851"/>
<dbReference type="eggNOG" id="KOG1400">
    <property type="taxonomic scope" value="Eukaryota"/>
</dbReference>
<dbReference type="GeneTree" id="ENSGT00390000016404"/>
<dbReference type="HOGENOM" id="CLU_025648_1_1_1"/>
<dbReference type="InParanoid" id="Q96SW2"/>
<dbReference type="OMA" id="SPQYIAR"/>
<dbReference type="OrthoDB" id="267517at2759"/>
<dbReference type="PAN-GO" id="Q96SW2">
    <property type="GO annotations" value="2 GO annotations based on evolutionary models"/>
</dbReference>
<dbReference type="PhylomeDB" id="Q96SW2"/>
<dbReference type="TreeFam" id="TF106115"/>
<dbReference type="PathwayCommons" id="Q96SW2"/>
<dbReference type="Reactome" id="R-HSA-9679191">
    <property type="pathway name" value="Potential therapeutics for SARS"/>
</dbReference>
<dbReference type="SignaLink" id="Q96SW2"/>
<dbReference type="SIGNOR" id="Q96SW2"/>
<dbReference type="UniPathway" id="UPA00143"/>
<dbReference type="BioGRID-ORCS" id="51185">
    <property type="hits" value="35 hits in 1204 CRISPR screens"/>
</dbReference>
<dbReference type="ChiTaRS" id="CRBN">
    <property type="organism name" value="human"/>
</dbReference>
<dbReference type="EvolutionaryTrace" id="Q96SW2"/>
<dbReference type="GeneWiki" id="Cereblon"/>
<dbReference type="GenomeRNAi" id="51185"/>
<dbReference type="Pharos" id="Q96SW2">
    <property type="development level" value="Tclin"/>
</dbReference>
<dbReference type="PRO" id="PR:Q96SW2"/>
<dbReference type="Proteomes" id="UP000005640">
    <property type="component" value="Chromosome 3"/>
</dbReference>
<dbReference type="RNAct" id="Q96SW2">
    <property type="molecule type" value="protein"/>
</dbReference>
<dbReference type="Bgee" id="ENSG00000113851">
    <property type="expression patterns" value="Expressed in calcaneal tendon and 202 other cell types or tissues"/>
</dbReference>
<dbReference type="ExpressionAtlas" id="Q96SW2">
    <property type="expression patterns" value="baseline and differential"/>
</dbReference>
<dbReference type="GO" id="GO:0031464">
    <property type="term" value="C:Cul4A-RING E3 ubiquitin ligase complex"/>
    <property type="evidence" value="ECO:0000314"/>
    <property type="project" value="UniProtKB"/>
</dbReference>
<dbReference type="GO" id="GO:0005737">
    <property type="term" value="C:cytoplasm"/>
    <property type="evidence" value="ECO:0000314"/>
    <property type="project" value="UniProtKB"/>
</dbReference>
<dbReference type="GO" id="GO:0005829">
    <property type="term" value="C:cytosol"/>
    <property type="evidence" value="ECO:0000304"/>
    <property type="project" value="Reactome"/>
</dbReference>
<dbReference type="GO" id="GO:0016020">
    <property type="term" value="C:membrane"/>
    <property type="evidence" value="ECO:0007669"/>
    <property type="project" value="UniProtKB-SubCell"/>
</dbReference>
<dbReference type="GO" id="GO:0005634">
    <property type="term" value="C:nucleus"/>
    <property type="evidence" value="ECO:0000314"/>
    <property type="project" value="UniProtKB"/>
</dbReference>
<dbReference type="GO" id="GO:0048471">
    <property type="term" value="C:perinuclear region of cytoplasm"/>
    <property type="evidence" value="ECO:0007669"/>
    <property type="project" value="Ensembl"/>
</dbReference>
<dbReference type="GO" id="GO:0046872">
    <property type="term" value="F:metal ion binding"/>
    <property type="evidence" value="ECO:0007669"/>
    <property type="project" value="UniProtKB-KW"/>
</dbReference>
<dbReference type="GO" id="GO:0044325">
    <property type="term" value="F:transmembrane transporter binding"/>
    <property type="evidence" value="ECO:0007669"/>
    <property type="project" value="Ensembl"/>
</dbReference>
<dbReference type="GO" id="GO:0035641">
    <property type="term" value="P:locomotory exploration behavior"/>
    <property type="evidence" value="ECO:0007669"/>
    <property type="project" value="Ensembl"/>
</dbReference>
<dbReference type="GO" id="GO:0034766">
    <property type="term" value="P:negative regulation of monoatomic ion transmembrane transport"/>
    <property type="evidence" value="ECO:0007669"/>
    <property type="project" value="Ensembl"/>
</dbReference>
<dbReference type="GO" id="GO:0031333">
    <property type="term" value="P:negative regulation of protein-containing complex assembly"/>
    <property type="evidence" value="ECO:0007669"/>
    <property type="project" value="Ensembl"/>
</dbReference>
<dbReference type="GO" id="GO:0031334">
    <property type="term" value="P:positive regulation of protein-containing complex assembly"/>
    <property type="evidence" value="ECO:0007669"/>
    <property type="project" value="Ensembl"/>
</dbReference>
<dbReference type="GO" id="GO:0030177">
    <property type="term" value="P:positive regulation of Wnt signaling pathway"/>
    <property type="evidence" value="ECO:0000315"/>
    <property type="project" value="FlyBase"/>
</dbReference>
<dbReference type="GO" id="GO:0043161">
    <property type="term" value="P:proteasome-mediated ubiquitin-dependent protein catabolic process"/>
    <property type="evidence" value="ECO:0000315"/>
    <property type="project" value="UniProtKB"/>
</dbReference>
<dbReference type="GO" id="GO:0016567">
    <property type="term" value="P:protein ubiquitination"/>
    <property type="evidence" value="ECO:0000315"/>
    <property type="project" value="UniProtKB"/>
</dbReference>
<dbReference type="CDD" id="cd15777">
    <property type="entry name" value="CRBN_C_like"/>
    <property type="match status" value="1"/>
</dbReference>
<dbReference type="FunFam" id="1.20.58.1480:FF:000004">
    <property type="entry name" value="Cereblon, isoform CRA_c"/>
    <property type="match status" value="1"/>
</dbReference>
<dbReference type="FunFam" id="2.30.130.40:FF:000002">
    <property type="entry name" value="Cereblon, isoform CRA_c"/>
    <property type="match status" value="1"/>
</dbReference>
<dbReference type="FunFam" id="2.170.150.20:FF:000007">
    <property type="entry name" value="Protein cereblon"/>
    <property type="match status" value="1"/>
</dbReference>
<dbReference type="Gene3D" id="1.20.58.1480">
    <property type="match status" value="1"/>
</dbReference>
<dbReference type="Gene3D" id="2.30.130.40">
    <property type="entry name" value="LON domain-like"/>
    <property type="match status" value="1"/>
</dbReference>
<dbReference type="Gene3D" id="2.170.150.20">
    <property type="entry name" value="Peptide methionine sulfoxide reductase"/>
    <property type="match status" value="1"/>
</dbReference>
<dbReference type="InterPro" id="IPR034750">
    <property type="entry name" value="CULT"/>
</dbReference>
<dbReference type="InterPro" id="IPR003111">
    <property type="entry name" value="Lon_prtase_N"/>
</dbReference>
<dbReference type="InterPro" id="IPR046336">
    <property type="entry name" value="Lon_prtase_N_sf"/>
</dbReference>
<dbReference type="InterPro" id="IPR015947">
    <property type="entry name" value="PUA-like_sf"/>
</dbReference>
<dbReference type="InterPro" id="IPR004910">
    <property type="entry name" value="Yippee/Mis18/Cereblon"/>
</dbReference>
<dbReference type="PANTHER" id="PTHR14255">
    <property type="entry name" value="CEREBLON"/>
    <property type="match status" value="1"/>
</dbReference>
<dbReference type="PANTHER" id="PTHR14255:SF4">
    <property type="entry name" value="PROTEIN CEREBLON"/>
    <property type="match status" value="1"/>
</dbReference>
<dbReference type="Pfam" id="PF02190">
    <property type="entry name" value="LON_substr_bdg"/>
    <property type="match status" value="1"/>
</dbReference>
<dbReference type="Pfam" id="PF03226">
    <property type="entry name" value="Yippee-Mis18"/>
    <property type="match status" value="1"/>
</dbReference>
<dbReference type="SMART" id="SM00464">
    <property type="entry name" value="LON"/>
    <property type="match status" value="1"/>
</dbReference>
<dbReference type="SUPFAM" id="SSF88697">
    <property type="entry name" value="PUA domain-like"/>
    <property type="match status" value="1"/>
</dbReference>
<dbReference type="PROSITE" id="PS51788">
    <property type="entry name" value="CULT"/>
    <property type="match status" value="1"/>
</dbReference>
<dbReference type="PROSITE" id="PS51787">
    <property type="entry name" value="LON_N"/>
    <property type="match status" value="1"/>
</dbReference>
<gene>
    <name type="primary">CRBN</name>
    <name type="ORF">AD-006</name>
</gene>
<sequence>MAGEGDQQDAAHNMGNHLPLLPAESEEEDEMEVEDQDSKEAKKPNIINFDTSLPTSHTYLGADMEEFHGRTLHDDDSCQVIPVLPQVMMILIPGQTLPLQLFHPQEVSMVRNLIQKDRTFAVLAYSNVQEREAQFGTTAEIYAYREEQDFGIEIVKVKAIGRQRFKVLELRTQSDGIQQAKVQILPECVLPSTMSAVQLESLNKCQIFPSKPVSREDQCSYKWWQKYQKRKFHCANLTSWPRWLYSLYDAETLMDRIKKQLREWDENLKDDSLPSNPIDFSYRVAACLPIDDVLRIQLLKIGSAIQRLRCELDIMNKCTSLCCKQCQETEITTKNEIFSLSLCGPMAAYVNPHGYVHETLTVYKACNLNLIGRPSTEHSWFPGYAWTVAQCKICASHIGWKFTATKKDMSPQKFWGLTRSALLPTIPDTEDEISPDKVILCL</sequence>
<keyword id="KW-0002">3D-structure</keyword>
<keyword id="KW-0025">Alternative splicing</keyword>
<keyword id="KW-0963">Cytoplasm</keyword>
<keyword id="KW-0225">Disease variant</keyword>
<keyword id="KW-0991">Intellectual disability</keyword>
<keyword id="KW-0472">Membrane</keyword>
<keyword id="KW-0479">Metal-binding</keyword>
<keyword id="KW-0539">Nucleus</keyword>
<keyword id="KW-0597">Phosphoprotein</keyword>
<keyword id="KW-1267">Proteomics identification</keyword>
<keyword id="KW-1185">Reference proteome</keyword>
<keyword id="KW-0832">Ubl conjugation</keyword>
<keyword id="KW-0833">Ubl conjugation pathway</keyword>
<keyword id="KW-0862">Zinc</keyword>
<reference key="1">
    <citation type="journal article" date="2004" name="Nat. Genet.">
        <title>Complete sequencing and characterization of 21,243 full-length human cDNAs.</title>
        <authorList>
            <person name="Ota T."/>
            <person name="Suzuki Y."/>
            <person name="Nishikawa T."/>
            <person name="Otsuki T."/>
            <person name="Sugiyama T."/>
            <person name="Irie R."/>
            <person name="Wakamatsu A."/>
            <person name="Hayashi K."/>
            <person name="Sato H."/>
            <person name="Nagai K."/>
            <person name="Kimura K."/>
            <person name="Makita H."/>
            <person name="Sekine M."/>
            <person name="Obayashi M."/>
            <person name="Nishi T."/>
            <person name="Shibahara T."/>
            <person name="Tanaka T."/>
            <person name="Ishii S."/>
            <person name="Yamamoto J."/>
            <person name="Saito K."/>
            <person name="Kawai Y."/>
            <person name="Isono Y."/>
            <person name="Nakamura Y."/>
            <person name="Nagahari K."/>
            <person name="Murakami K."/>
            <person name="Yasuda T."/>
            <person name="Iwayanagi T."/>
            <person name="Wagatsuma M."/>
            <person name="Shiratori A."/>
            <person name="Sudo H."/>
            <person name="Hosoiri T."/>
            <person name="Kaku Y."/>
            <person name="Kodaira H."/>
            <person name="Kondo H."/>
            <person name="Sugawara M."/>
            <person name="Takahashi M."/>
            <person name="Kanda K."/>
            <person name="Yokoi T."/>
            <person name="Furuya T."/>
            <person name="Kikkawa E."/>
            <person name="Omura Y."/>
            <person name="Abe K."/>
            <person name="Kamihara K."/>
            <person name="Katsuta N."/>
            <person name="Sato K."/>
            <person name="Tanikawa M."/>
            <person name="Yamazaki M."/>
            <person name="Ninomiya K."/>
            <person name="Ishibashi T."/>
            <person name="Yamashita H."/>
            <person name="Murakawa K."/>
            <person name="Fujimori K."/>
            <person name="Tanai H."/>
            <person name="Kimata M."/>
            <person name="Watanabe M."/>
            <person name="Hiraoka S."/>
            <person name="Chiba Y."/>
            <person name="Ishida S."/>
            <person name="Ono Y."/>
            <person name="Takiguchi S."/>
            <person name="Watanabe S."/>
            <person name="Yosida M."/>
            <person name="Hotuta T."/>
            <person name="Kusano J."/>
            <person name="Kanehori K."/>
            <person name="Takahashi-Fujii A."/>
            <person name="Hara H."/>
            <person name="Tanase T.-O."/>
            <person name="Nomura Y."/>
            <person name="Togiya S."/>
            <person name="Komai F."/>
            <person name="Hara R."/>
            <person name="Takeuchi K."/>
            <person name="Arita M."/>
            <person name="Imose N."/>
            <person name="Musashino K."/>
            <person name="Yuuki H."/>
            <person name="Oshima A."/>
            <person name="Sasaki N."/>
            <person name="Aotsuka S."/>
            <person name="Yoshikawa Y."/>
            <person name="Matsunawa H."/>
            <person name="Ichihara T."/>
            <person name="Shiohata N."/>
            <person name="Sano S."/>
            <person name="Moriya S."/>
            <person name="Momiyama H."/>
            <person name="Satoh N."/>
            <person name="Takami S."/>
            <person name="Terashima Y."/>
            <person name="Suzuki O."/>
            <person name="Nakagawa S."/>
            <person name="Senoh A."/>
            <person name="Mizoguchi H."/>
            <person name="Goto Y."/>
            <person name="Shimizu F."/>
            <person name="Wakebe H."/>
            <person name="Hishigaki H."/>
            <person name="Watanabe T."/>
            <person name="Sugiyama A."/>
            <person name="Takemoto M."/>
            <person name="Kawakami B."/>
            <person name="Yamazaki M."/>
            <person name="Watanabe K."/>
            <person name="Kumagai A."/>
            <person name="Itakura S."/>
            <person name="Fukuzumi Y."/>
            <person name="Fujimori Y."/>
            <person name="Komiyama M."/>
            <person name="Tashiro H."/>
            <person name="Tanigami A."/>
            <person name="Fujiwara T."/>
            <person name="Ono T."/>
            <person name="Yamada K."/>
            <person name="Fujii Y."/>
            <person name="Ozaki K."/>
            <person name="Hirao M."/>
            <person name="Ohmori Y."/>
            <person name="Kawabata A."/>
            <person name="Hikiji T."/>
            <person name="Kobatake N."/>
            <person name="Inagaki H."/>
            <person name="Ikema Y."/>
            <person name="Okamoto S."/>
            <person name="Okitani R."/>
            <person name="Kawakami T."/>
            <person name="Noguchi S."/>
            <person name="Itoh T."/>
            <person name="Shigeta K."/>
            <person name="Senba T."/>
            <person name="Matsumura K."/>
            <person name="Nakajima Y."/>
            <person name="Mizuno T."/>
            <person name="Morinaga M."/>
            <person name="Sasaki M."/>
            <person name="Togashi T."/>
            <person name="Oyama M."/>
            <person name="Hata H."/>
            <person name="Watanabe M."/>
            <person name="Komatsu T."/>
            <person name="Mizushima-Sugano J."/>
            <person name="Satoh T."/>
            <person name="Shirai Y."/>
            <person name="Takahashi Y."/>
            <person name="Nakagawa K."/>
            <person name="Okumura K."/>
            <person name="Nagase T."/>
            <person name="Nomura N."/>
            <person name="Kikuchi H."/>
            <person name="Masuho Y."/>
            <person name="Yamashita R."/>
            <person name="Nakai K."/>
            <person name="Yada T."/>
            <person name="Nakamura Y."/>
            <person name="Ohara O."/>
            <person name="Isogai T."/>
            <person name="Sugano S."/>
        </authorList>
    </citation>
    <scope>NUCLEOTIDE SEQUENCE [LARGE SCALE MRNA] (ISOFORM 1)</scope>
    <source>
        <tissue>Brain</tissue>
    </source>
</reference>
<reference key="2">
    <citation type="journal article" date="2006" name="Nature">
        <title>The DNA sequence, annotation and analysis of human chromosome 3.</title>
        <authorList>
            <person name="Muzny D.M."/>
            <person name="Scherer S.E."/>
            <person name="Kaul R."/>
            <person name="Wang J."/>
            <person name="Yu J."/>
            <person name="Sudbrak R."/>
            <person name="Buhay C.J."/>
            <person name="Chen R."/>
            <person name="Cree A."/>
            <person name="Ding Y."/>
            <person name="Dugan-Rocha S."/>
            <person name="Gill R."/>
            <person name="Gunaratne P."/>
            <person name="Harris R.A."/>
            <person name="Hawes A.C."/>
            <person name="Hernandez J."/>
            <person name="Hodgson A.V."/>
            <person name="Hume J."/>
            <person name="Jackson A."/>
            <person name="Khan Z.M."/>
            <person name="Kovar-Smith C."/>
            <person name="Lewis L.R."/>
            <person name="Lozado R.J."/>
            <person name="Metzker M.L."/>
            <person name="Milosavljevic A."/>
            <person name="Miner G.R."/>
            <person name="Morgan M.B."/>
            <person name="Nazareth L.V."/>
            <person name="Scott G."/>
            <person name="Sodergren E."/>
            <person name="Song X.-Z."/>
            <person name="Steffen D."/>
            <person name="Wei S."/>
            <person name="Wheeler D.A."/>
            <person name="Wright M.W."/>
            <person name="Worley K.C."/>
            <person name="Yuan Y."/>
            <person name="Zhang Z."/>
            <person name="Adams C.Q."/>
            <person name="Ansari-Lari M.A."/>
            <person name="Ayele M."/>
            <person name="Brown M.J."/>
            <person name="Chen G."/>
            <person name="Chen Z."/>
            <person name="Clendenning J."/>
            <person name="Clerc-Blankenburg K.P."/>
            <person name="Chen R."/>
            <person name="Chen Z."/>
            <person name="Davis C."/>
            <person name="Delgado O."/>
            <person name="Dinh H.H."/>
            <person name="Dong W."/>
            <person name="Draper H."/>
            <person name="Ernst S."/>
            <person name="Fu G."/>
            <person name="Gonzalez-Garay M.L."/>
            <person name="Garcia D.K."/>
            <person name="Gillett W."/>
            <person name="Gu J."/>
            <person name="Hao B."/>
            <person name="Haugen E."/>
            <person name="Havlak P."/>
            <person name="He X."/>
            <person name="Hennig S."/>
            <person name="Hu S."/>
            <person name="Huang W."/>
            <person name="Jackson L.R."/>
            <person name="Jacob L.S."/>
            <person name="Kelly S.H."/>
            <person name="Kube M."/>
            <person name="Levy R."/>
            <person name="Li Z."/>
            <person name="Liu B."/>
            <person name="Liu J."/>
            <person name="Liu W."/>
            <person name="Lu J."/>
            <person name="Maheshwari M."/>
            <person name="Nguyen B.-V."/>
            <person name="Okwuonu G.O."/>
            <person name="Palmeiri A."/>
            <person name="Pasternak S."/>
            <person name="Perez L.M."/>
            <person name="Phelps K.A."/>
            <person name="Plopper F.J."/>
            <person name="Qiang B."/>
            <person name="Raymond C."/>
            <person name="Rodriguez R."/>
            <person name="Saenphimmachak C."/>
            <person name="Santibanez J."/>
            <person name="Shen H."/>
            <person name="Shen Y."/>
            <person name="Subramanian S."/>
            <person name="Tabor P.E."/>
            <person name="Verduzco D."/>
            <person name="Waldron L."/>
            <person name="Wang J."/>
            <person name="Wang J."/>
            <person name="Wang Q."/>
            <person name="Williams G.A."/>
            <person name="Wong G.K.-S."/>
            <person name="Yao Z."/>
            <person name="Zhang J."/>
            <person name="Zhang X."/>
            <person name="Zhao G."/>
            <person name="Zhou J."/>
            <person name="Zhou Y."/>
            <person name="Nelson D."/>
            <person name="Lehrach H."/>
            <person name="Reinhardt R."/>
            <person name="Naylor S.L."/>
            <person name="Yang H."/>
            <person name="Olson M."/>
            <person name="Weinstock G."/>
            <person name="Gibbs R.A."/>
        </authorList>
    </citation>
    <scope>NUCLEOTIDE SEQUENCE [LARGE SCALE GENOMIC DNA]</scope>
</reference>
<reference key="3">
    <citation type="journal article" date="2004" name="Genome Res.">
        <title>The status, quality, and expansion of the NIH full-length cDNA project: the Mammalian Gene Collection (MGC).</title>
        <authorList>
            <consortium name="The MGC Project Team"/>
        </authorList>
    </citation>
    <scope>NUCLEOTIDE SEQUENCE [LARGE SCALE MRNA] (ISOFORMS 1 AND 2)</scope>
    <source>
        <tissue>Brain</tissue>
        <tissue>Lung</tissue>
    </source>
</reference>
<reference key="4">
    <citation type="journal article" date="2000" name="Proc. Natl. Acad. Sci. U.S.A.">
        <title>Gene expression profiling in the human hypothalamus-pituitary-adrenal axis and full-length cDNA cloning.</title>
        <authorList>
            <person name="Hu R.-M."/>
            <person name="Han Z.-G."/>
            <person name="Song H.-D."/>
            <person name="Peng Y.-D."/>
            <person name="Huang Q.-H."/>
            <person name="Ren S.-X."/>
            <person name="Gu Y.-J."/>
            <person name="Huang C.-H."/>
            <person name="Li Y.-B."/>
            <person name="Jiang C.-L."/>
            <person name="Fu G."/>
            <person name="Zhang Q.-H."/>
            <person name="Gu B.-W."/>
            <person name="Dai M."/>
            <person name="Mao Y.-F."/>
            <person name="Gao G.-F."/>
            <person name="Rong R."/>
            <person name="Ye M."/>
            <person name="Zhou J."/>
            <person name="Xu S.-H."/>
            <person name="Gu J."/>
            <person name="Shi J.-X."/>
            <person name="Jin W.-R."/>
            <person name="Zhang C.-K."/>
            <person name="Wu T.-M."/>
            <person name="Huang G.-Y."/>
            <person name="Chen Z."/>
            <person name="Chen M.-D."/>
            <person name="Chen J.-L."/>
        </authorList>
    </citation>
    <scope>NUCLEOTIDE SEQUENCE [LARGE SCALE MRNA] OF 3-442</scope>
    <source>
        <tissue>Adrenal gland</tissue>
    </source>
</reference>
<reference key="5">
    <citation type="journal article" date="2007" name="BMC Genomics">
        <title>The full-ORF clone resource of the German cDNA consortium.</title>
        <authorList>
            <person name="Bechtel S."/>
            <person name="Rosenfelder H."/>
            <person name="Duda A."/>
            <person name="Schmidt C.P."/>
            <person name="Ernst U."/>
            <person name="Wellenreuther R."/>
            <person name="Mehrle A."/>
            <person name="Schuster C."/>
            <person name="Bahr A."/>
            <person name="Bloecker H."/>
            <person name="Heubner D."/>
            <person name="Hoerlein A."/>
            <person name="Michel G."/>
            <person name="Wedler H."/>
            <person name="Koehrer K."/>
            <person name="Ottenwaelder B."/>
            <person name="Poustka A."/>
            <person name="Wiemann S."/>
            <person name="Schupp I."/>
        </authorList>
    </citation>
    <scope>NUCLEOTIDE SEQUENCE [LARGE SCALE MRNA] OF 64-250</scope>
    <source>
        <tissue>Fetal kidney</tissue>
    </source>
</reference>
<reference key="6">
    <citation type="journal article" date="2004" name="Neurology">
        <title>A mutation in a novel ATP-dependent Lon protease gene in a kindred with mild mental retardation.</title>
        <authorList>
            <person name="Higgins J.J."/>
            <person name="Pucilowska J."/>
            <person name="Lombardi R.Q."/>
            <person name="Rooney J.P."/>
        </authorList>
    </citation>
    <scope>INVOLVEMENT IN MRT2</scope>
    <scope>TISSUE SPECIFICITY</scope>
</reference>
<reference key="7">
    <citation type="journal article" date="2008" name="Mol. Biol. Rep.">
        <title>Primary function analysis of human mental retardation related gene CRBN.</title>
        <authorList>
            <person name="Xin W."/>
            <person name="Xiaohua N."/>
            <person name="Peilin C."/>
            <person name="Xin C."/>
            <person name="Yaqiong S."/>
            <person name="Qihan W."/>
        </authorList>
    </citation>
    <scope>TISSUE SPECIFICITY</scope>
</reference>
<reference key="8">
    <citation type="journal article" date="2008" name="Neurogenetics">
        <title>Dysregulation of large-conductance Ca2+-activated K+ channel expression in nonsyndromal mental retardation due to a cereblon p.R419X mutation.</title>
        <authorList>
            <person name="Higgins J.J."/>
            <person name="Hao J."/>
            <person name="Kosofsky B.E."/>
            <person name="Rajadhyaksha A.M."/>
        </authorList>
    </citation>
    <scope>FUNCTION</scope>
</reference>
<reference key="9">
    <citation type="journal article" date="2010" name="Science">
        <title>Identification of a primary target of thalidomide teratogenicity.</title>
        <authorList>
            <person name="Ito T."/>
            <person name="Ando H."/>
            <person name="Suzuki T."/>
            <person name="Ogura T."/>
            <person name="Hotta K."/>
            <person name="Imamura Y."/>
            <person name="Yamaguchi Y."/>
            <person name="Handa H."/>
        </authorList>
    </citation>
    <scope>FUNCTION</scope>
    <scope>SUBCELLULAR LOCATION</scope>
    <scope>IDENTIFICATION BY MASS SPECTROMETRY</scope>
    <scope>IDENTIFICATION IN A DCX COMPLEX WITH DDB1; RBX1 AND CUL4A</scope>
    <scope>THALIDOMIDE-BINDING</scope>
    <scope>UBIQUITINATION</scope>
    <scope>MUTAGENESIS OF TYR-384 AND TRP-386</scope>
</reference>
<reference key="10">
    <citation type="journal article" date="2013" name="J. Proteome Res.">
        <title>Toward a comprehensive characterization of a human cancer cell phosphoproteome.</title>
        <authorList>
            <person name="Zhou H."/>
            <person name="Di Palma S."/>
            <person name="Preisinger C."/>
            <person name="Peng M."/>
            <person name="Polat A.N."/>
            <person name="Heck A.J."/>
            <person name="Mohammed S."/>
        </authorList>
    </citation>
    <scope>PHOSPHORYLATION [LARGE SCALE ANALYSIS] AT SER-25</scope>
    <scope>IDENTIFICATION BY MASS SPECTROMETRY [LARGE SCALE ANALYSIS]</scope>
    <source>
        <tissue>Erythroleukemia</tissue>
    </source>
</reference>
<reference key="11">
    <citation type="journal article" date="2014" name="Br. J. Haematol.">
        <title>Immunomodulatory agents lenalidomide and pomalidomide co-stimulate T cells by inducing degradation of T cell repressors Ikaros and Aiolos via modulation of the E3 ubiquitin ligase complex CRL4(CRBN.).</title>
        <authorList>
            <person name="Gandhi A.K."/>
            <person name="Kang J."/>
            <person name="Havens C.G."/>
            <person name="Conklin T."/>
            <person name="Ning Y."/>
            <person name="Wu L."/>
            <person name="Ito T."/>
            <person name="Ando H."/>
            <person name="Waldman M.F."/>
            <person name="Thakurta A."/>
            <person name="Klippel A."/>
            <person name="Handa H."/>
            <person name="Daniel T.O."/>
            <person name="Schafer P.H."/>
            <person name="Chopra R."/>
        </authorList>
    </citation>
    <scope>FUNCTION</scope>
    <scope>MISCELLANEOUS</scope>
</reference>
<reference key="12">
    <citation type="journal article" date="2014" name="Nature">
        <title>Structure of the DDB1-CRBN E3 ubiquitin ligase in complex with thalidomide.</title>
        <authorList>
            <person name="Fischer E.S."/>
            <person name="Bohm K."/>
            <person name="Lydeard J.R."/>
            <person name="Yang H."/>
            <person name="Stadler M.B."/>
            <person name="Cavadini S."/>
            <person name="Nagel J."/>
            <person name="Serluca F."/>
            <person name="Acker V."/>
            <person name="Lingaraju G.M."/>
            <person name="Tichkule R.B."/>
            <person name="Schebesta M."/>
            <person name="Forrester W.C."/>
            <person name="Schirle M."/>
            <person name="Hassiepen U."/>
            <person name="Ottl J."/>
            <person name="Hild M."/>
            <person name="Beckwith R.E."/>
            <person name="Harper J.W."/>
            <person name="Jenkins J.L."/>
            <person name="Thoma N.H."/>
        </authorList>
    </citation>
    <scope>FUNCTION</scope>
    <scope>INTERACTION WITH DDB1</scope>
    <scope>UBIQUITINATION</scope>
</reference>
<reference key="13">
    <citation type="journal article" date="2016" name="Mol. Cell">
        <title>Glutamine triggers acetylation-dependent degradation of glutamine synthetase via the thalidomide receptor cereblon.</title>
        <authorList>
            <person name="Nguyen T.V."/>
            <person name="Lee J.E."/>
            <person name="Sweredoski M.J."/>
            <person name="Yang S.J."/>
            <person name="Jeon S.J."/>
            <person name="Harrison J.S."/>
            <person name="Yim J.H."/>
            <person name="Lee S.G."/>
            <person name="Handa H."/>
            <person name="Kuhlman B."/>
            <person name="Jeong J.S."/>
            <person name="Reitsma J.M."/>
            <person name="Park C.S."/>
            <person name="Hess S."/>
            <person name="Deshaies R.J."/>
        </authorList>
    </citation>
    <scope>FUNCTION</scope>
</reference>
<reference key="14">
    <citation type="journal article" date="2018" name="J. Neurosci.">
        <title>Cereblon Maintains Synaptic and Cognitive Function by Regulating BK Channel.</title>
        <authorList>
            <person name="Choi T.Y."/>
            <person name="Lee S.H."/>
            <person name="Kim Y.J."/>
            <person name="Bae J.R."/>
            <person name="Lee K.M."/>
            <person name="Jo Y."/>
            <person name="Kim S.J."/>
            <person name="Lee A.R."/>
            <person name="Choi S."/>
            <person name="Choi L.M."/>
            <person name="Bang S."/>
            <person name="Song M.R."/>
            <person name="Chung J."/>
            <person name="Lee K.J."/>
            <person name="Kim S.H."/>
            <person name="Park C.S."/>
            <person name="Choi S.Y."/>
        </authorList>
    </citation>
    <scope>FUNCTION</scope>
    <scope>MUTAGENESIS OF 419-ARG--LEU-442</scope>
</reference>
<reference key="15">
    <citation type="journal article" date="2020" name="Protein J.">
        <title>Cereblon Promotes the Ubiquitination and Proteasomal Degradation of Interleukin Enhancer-Binding Factor 2.</title>
        <authorList>
            <person name="Lian Q."/>
            <person name="Gao Y."/>
            <person name="Li Q."/>
            <person name="He X."/>
            <person name="Jiang X."/>
            <person name="Pu Z."/>
            <person name="Xu G."/>
        </authorList>
    </citation>
    <scope>FUNCTION</scope>
    <scope>INTERACTION WITH ILF2</scope>
</reference>
<reference key="16">
    <citation type="journal article" date="2014" name="Nat. Struct. Mol. Biol.">
        <title>Structure of the human cereblon-DDB1-lenalidomide complex reveals basis for responsiveness to thalidomide analogs.</title>
        <authorList>
            <person name="Chamberlain P.P."/>
            <person name="Lopez-Girona A."/>
            <person name="Miller K."/>
            <person name="Carmel G."/>
            <person name="Pagarigan B."/>
            <person name="Chie-Leon B."/>
            <person name="Rychak E."/>
            <person name="Corral L.G."/>
            <person name="Ren Y.J."/>
            <person name="Wang M."/>
            <person name="Riley M."/>
            <person name="Delker S.L."/>
            <person name="Ito T."/>
            <person name="Ando H."/>
            <person name="Mori T."/>
            <person name="Hirano Y."/>
            <person name="Handa H."/>
            <person name="Hakoshima T."/>
            <person name="Daniel T.O."/>
            <person name="Cathers B.E."/>
        </authorList>
    </citation>
    <scope>X-RAY CRYSTALLOGRAPHY (3.01 ANGSTROMS) OF 48-428 IN COMPLEX WITH DDB1; S-LENALIDOMIDE AND ZINC</scope>
    <scope>FUNCTION</scope>
    <scope>INTERACTION WITH DDB1</scope>
    <scope>DOMAIN</scope>
    <scope>MUTAGENESIS OF TRP-386</scope>
    <scope>MISCELLANEOUS</scope>
</reference>
<reference key="17">
    <citation type="journal article" date="2017" name="J. Med. Genet.">
        <title>A missense mutation in the CRBN gene that segregates with intellectual disability and self-mutilating behaviour in a consanguineous Saudi family.</title>
        <authorList>
            <person name="Sheereen A."/>
            <person name="Alaamery M."/>
            <person name="Bawazeer S."/>
            <person name="Al Yafee Y."/>
            <person name="Massadeh S."/>
            <person name="Eyaid W."/>
        </authorList>
    </citation>
    <scope>INVOLVEMENT IN MRT2</scope>
    <scope>VARIANT MRT2 ARG-391</scope>
</reference>
<reference key="18">
    <citation type="journal article" date="2019" name="Front. Immunol.">
        <title>CRBN Is a Negative Regulator of Bactericidal Activity and Autophagy Activation Through Inhibiting the Ubiquitination of ECSIT and BECN1.</title>
        <authorList>
            <person name="Kim M.J."/>
            <person name="Min Y."/>
            <person name="Shim J.H."/>
            <person name="Chun E."/>
            <person name="Lee K.Y."/>
        </authorList>
    </citation>
    <scope>FUNCTION</scope>
    <scope>INTERACTION WITH TRAF6 AND ECSIT</scope>
</reference>
<protein>
    <recommendedName>
        <fullName>Protein cereblon</fullName>
    </recommendedName>
</protein>
<accession>Q96SW2</accession>
<accession>B2R6H4</accession>
<accession>C9IZA9</accession>
<accession>C9JAH6</accession>
<accession>Q6AI62</accession>
<accession>Q6NVZ0</accession>
<accession>Q9UHW4</accession>